<evidence type="ECO:0000255" key="1">
    <source>
        <dbReference type="HAMAP-Rule" id="MF_02003"/>
    </source>
</evidence>
<comment type="function">
    <text evidence="1">Catalyzes the attachment of isoleucine to tRNA(Ile). As IleRS can inadvertently accommodate and process structurally similar amino acids such as valine, to avoid such errors it has two additional distinct tRNA(Ile)-dependent editing activities. One activity is designated as 'pretransfer' editing and involves the hydrolysis of activated Val-AMP. The other activity is designated 'posttransfer' editing and involves deacylation of mischarged Val-tRNA(Ile).</text>
</comment>
<comment type="catalytic activity">
    <reaction evidence="1">
        <text>tRNA(Ile) + L-isoleucine + ATP = L-isoleucyl-tRNA(Ile) + AMP + diphosphate</text>
        <dbReference type="Rhea" id="RHEA:11060"/>
        <dbReference type="Rhea" id="RHEA-COMP:9666"/>
        <dbReference type="Rhea" id="RHEA-COMP:9695"/>
        <dbReference type="ChEBI" id="CHEBI:30616"/>
        <dbReference type="ChEBI" id="CHEBI:33019"/>
        <dbReference type="ChEBI" id="CHEBI:58045"/>
        <dbReference type="ChEBI" id="CHEBI:78442"/>
        <dbReference type="ChEBI" id="CHEBI:78528"/>
        <dbReference type="ChEBI" id="CHEBI:456215"/>
        <dbReference type="EC" id="6.1.1.5"/>
    </reaction>
</comment>
<comment type="cofactor">
    <cofactor evidence="1">
        <name>Zn(2+)</name>
        <dbReference type="ChEBI" id="CHEBI:29105"/>
    </cofactor>
</comment>
<comment type="subunit">
    <text evidence="1">Monomer.</text>
</comment>
<comment type="subcellular location">
    <subcellularLocation>
        <location evidence="1">Cytoplasm</location>
    </subcellularLocation>
</comment>
<comment type="domain">
    <text evidence="1">IleRS has two distinct active sites: one for aminoacylation and one for editing. The misactivated valine is translocated from the active site to the editing site, which sterically excludes the correctly activated isoleucine. The single editing site contains two valyl binding pockets, one specific for each substrate (Val-AMP or Val-tRNA(Ile)).</text>
</comment>
<comment type="similarity">
    <text evidence="1">Belongs to the class-I aminoacyl-tRNA synthetase family. IleS type 2 subfamily.</text>
</comment>
<organism>
    <name type="scientific">Chlamydia trachomatis serovar D (strain ATCC VR-885 / DSM 19411 / UW-3/Cx)</name>
    <dbReference type="NCBI Taxonomy" id="272561"/>
    <lineage>
        <taxon>Bacteria</taxon>
        <taxon>Pseudomonadati</taxon>
        <taxon>Chlamydiota</taxon>
        <taxon>Chlamydiia</taxon>
        <taxon>Chlamydiales</taxon>
        <taxon>Chlamydiaceae</taxon>
        <taxon>Chlamydia/Chlamydophila group</taxon>
        <taxon>Chlamydia</taxon>
    </lineage>
</organism>
<keyword id="KW-0030">Aminoacyl-tRNA synthetase</keyword>
<keyword id="KW-0067">ATP-binding</keyword>
<keyword id="KW-0963">Cytoplasm</keyword>
<keyword id="KW-0436">Ligase</keyword>
<keyword id="KW-0479">Metal-binding</keyword>
<keyword id="KW-0547">Nucleotide-binding</keyword>
<keyword id="KW-0648">Protein biosynthesis</keyword>
<keyword id="KW-1185">Reference proteome</keyword>
<keyword id="KW-0862">Zinc</keyword>
<proteinExistence type="inferred from homology"/>
<name>SYI_CHLTR</name>
<sequence length="1036" mass="118985">MDNEDKISISAKEEKILSFWKEQDIFQKTLDNREGCPTFSFYDGPPFATGLPHYGHLLAGTIKDVVCRYASMDGHYVPRRFGWDCHGVPVEYEVEKSLGLTEPGAIERFGVANFNEECRKIVFRYADEWKYFVDRIGRWVDFSATWRTMDLSFMESVWWVFRSLYDQGLVYEGTKVVPFSTKLGTPLSNFEAGQNYKEVDDPSVVVKFALQDNQGFLLAWTTTPWTLVSNMALAVHPELTYVRIKDKESGDEYILGQESLPRWFPDRESYEWIGQLSGKSLVGQSYEPLFPYFQDKKELEAFRILPADFIEESEGTGIVHMAPAFGEADFFACQEHNVPLVCPVDNQGCYTAEVKDFVGEYIKSADKGIARRLKNENKLFYQGTVRHRYPFCWRTDSPLIYKAVNSWFVAVEKVKSKMLKANESIHWTPEHIKQGRFGKWLEGARDWAISRNRYWGTPIPIWRSDDGELLVIGSIQELEALSGQKIVDLHRHFIDEIEINQNGKSFRRIPYVFDCWFDSGAMPYAQNHYPFERAEETEACFPADFIAEGLDQTRGWFYTLTVIAAALFDQPAFKNVIVNGIILAEDGNKMSKRLNNYPSPKMIMDAYGADALRLYLLNSVVVKAEDLRFSDKGVESVLKQVLLPLSNALAFYKTYAELYGFDPKETDNIELAEIDRWILSSLYSLVGKTRESMSQYDLHAAVNPFVDFIEDLTNWYIRRSRRRFWDAEDSADRRAAFSTLYEVLVVFSKVIAPFIPFIAEDMYQQLRGETDPESVHLCDFPHVVLEKILPDLERKMQDIREIVALGHSLRKEHKLKVRQPLQNVYIVGSKERKEALAQVGSLIGEELNVKDVHFCSETPEYVTTLIKPNFRTLGKKVGNRLPEIQRALAGLPQEQIQAFMHKGQMVVSLGEETISLDKEDITVSWASAEGFVARSSASFVAVLDCQLTEPLIMEGIARELVNKINTMRRNRKLHVSDRIAIRLHAPVIVQEAFALHKEYICEETLTTSVSVIDYKEGEEWDINGHAVSFVLERVER</sequence>
<gene>
    <name evidence="1" type="primary">ileS</name>
    <name type="ordered locus">CT_019</name>
</gene>
<reference key="1">
    <citation type="journal article" date="1998" name="Science">
        <title>Genome sequence of an obligate intracellular pathogen of humans: Chlamydia trachomatis.</title>
        <authorList>
            <person name="Stephens R.S."/>
            <person name="Kalman S."/>
            <person name="Lammel C.J."/>
            <person name="Fan J."/>
            <person name="Marathe R."/>
            <person name="Aravind L."/>
            <person name="Mitchell W.P."/>
            <person name="Olinger L."/>
            <person name="Tatusov R.L."/>
            <person name="Zhao Q."/>
            <person name="Koonin E.V."/>
            <person name="Davis R.W."/>
        </authorList>
    </citation>
    <scope>NUCLEOTIDE SEQUENCE [LARGE SCALE GENOMIC DNA]</scope>
    <source>
        <strain>ATCC VR-885 / DSM 19411 / UW-3/Cx</strain>
    </source>
</reference>
<protein>
    <recommendedName>
        <fullName evidence="1">Isoleucine--tRNA ligase</fullName>
        <ecNumber evidence="1">6.1.1.5</ecNumber>
    </recommendedName>
    <alternativeName>
        <fullName evidence="1">Isoleucyl-tRNA synthetase</fullName>
        <shortName evidence="1">IleRS</shortName>
    </alternativeName>
</protein>
<dbReference type="EC" id="6.1.1.5" evidence="1"/>
<dbReference type="EMBL" id="AE001273">
    <property type="protein sequence ID" value="AAC67609.1"/>
    <property type="molecule type" value="Genomic_DNA"/>
</dbReference>
<dbReference type="PIR" id="F71565">
    <property type="entry name" value="F71565"/>
</dbReference>
<dbReference type="RefSeq" id="NP_219521.1">
    <property type="nucleotide sequence ID" value="NC_000117.1"/>
</dbReference>
<dbReference type="RefSeq" id="WP_010724987.1">
    <property type="nucleotide sequence ID" value="NC_000117.1"/>
</dbReference>
<dbReference type="SMR" id="O84022"/>
<dbReference type="FunCoup" id="O84022">
    <property type="interactions" value="254"/>
</dbReference>
<dbReference type="STRING" id="272561.CT_019"/>
<dbReference type="EnsemblBacteria" id="AAC67609">
    <property type="protein sequence ID" value="AAC67609"/>
    <property type="gene ID" value="CT_019"/>
</dbReference>
<dbReference type="GeneID" id="884097"/>
<dbReference type="KEGG" id="ctr:CT_019"/>
<dbReference type="PATRIC" id="fig|272561.5.peg.24"/>
<dbReference type="HOGENOM" id="CLU_001493_1_0_0"/>
<dbReference type="InParanoid" id="O84022"/>
<dbReference type="OrthoDB" id="9810365at2"/>
<dbReference type="Proteomes" id="UP000000431">
    <property type="component" value="Chromosome"/>
</dbReference>
<dbReference type="GO" id="GO:0005737">
    <property type="term" value="C:cytoplasm"/>
    <property type="evidence" value="ECO:0007669"/>
    <property type="project" value="UniProtKB-SubCell"/>
</dbReference>
<dbReference type="GO" id="GO:0002161">
    <property type="term" value="F:aminoacyl-tRNA deacylase activity"/>
    <property type="evidence" value="ECO:0007669"/>
    <property type="project" value="InterPro"/>
</dbReference>
<dbReference type="GO" id="GO:0005524">
    <property type="term" value="F:ATP binding"/>
    <property type="evidence" value="ECO:0007669"/>
    <property type="project" value="UniProtKB-UniRule"/>
</dbReference>
<dbReference type="GO" id="GO:0004822">
    <property type="term" value="F:isoleucine-tRNA ligase activity"/>
    <property type="evidence" value="ECO:0000318"/>
    <property type="project" value="GO_Central"/>
</dbReference>
<dbReference type="GO" id="GO:0000049">
    <property type="term" value="F:tRNA binding"/>
    <property type="evidence" value="ECO:0007669"/>
    <property type="project" value="InterPro"/>
</dbReference>
<dbReference type="GO" id="GO:0008270">
    <property type="term" value="F:zinc ion binding"/>
    <property type="evidence" value="ECO:0007669"/>
    <property type="project" value="UniProtKB-UniRule"/>
</dbReference>
<dbReference type="GO" id="GO:0006428">
    <property type="term" value="P:isoleucyl-tRNA aminoacylation"/>
    <property type="evidence" value="ECO:0000318"/>
    <property type="project" value="GO_Central"/>
</dbReference>
<dbReference type="CDD" id="cd07961">
    <property type="entry name" value="Anticodon_Ia_Ile_ABEc"/>
    <property type="match status" value="1"/>
</dbReference>
<dbReference type="CDD" id="cd00818">
    <property type="entry name" value="IleRS_core"/>
    <property type="match status" value="1"/>
</dbReference>
<dbReference type="FunFam" id="3.40.50.620:FF:000241">
    <property type="entry name" value="Isoleucine--tRNA ligase"/>
    <property type="match status" value="1"/>
</dbReference>
<dbReference type="FunFam" id="3.40.50.620:FF:000133">
    <property type="entry name" value="Isoleucyl-tRNA synthetase, cytoplasmic"/>
    <property type="match status" value="1"/>
</dbReference>
<dbReference type="Gene3D" id="3.40.50.620">
    <property type="entry name" value="HUPs"/>
    <property type="match status" value="2"/>
</dbReference>
<dbReference type="Gene3D" id="1.10.730.10">
    <property type="entry name" value="Isoleucyl-tRNA Synthetase, Domain 1"/>
    <property type="match status" value="1"/>
</dbReference>
<dbReference type="HAMAP" id="MF_02003">
    <property type="entry name" value="Ile_tRNA_synth_type2"/>
    <property type="match status" value="1"/>
</dbReference>
<dbReference type="InterPro" id="IPR001412">
    <property type="entry name" value="aa-tRNA-synth_I_CS"/>
</dbReference>
<dbReference type="InterPro" id="IPR002300">
    <property type="entry name" value="aa-tRNA-synth_Ia"/>
</dbReference>
<dbReference type="InterPro" id="IPR033709">
    <property type="entry name" value="Anticodon_Ile_ABEc"/>
</dbReference>
<dbReference type="InterPro" id="IPR002301">
    <property type="entry name" value="Ile-tRNA-ligase"/>
</dbReference>
<dbReference type="InterPro" id="IPR023586">
    <property type="entry name" value="Ile-tRNA-ligase_type2"/>
</dbReference>
<dbReference type="InterPro" id="IPR013155">
    <property type="entry name" value="M/V/L/I-tRNA-synth_anticd-bd"/>
</dbReference>
<dbReference type="InterPro" id="IPR014729">
    <property type="entry name" value="Rossmann-like_a/b/a_fold"/>
</dbReference>
<dbReference type="InterPro" id="IPR009080">
    <property type="entry name" value="tRNAsynth_Ia_anticodon-bd"/>
</dbReference>
<dbReference type="InterPro" id="IPR009008">
    <property type="entry name" value="Val/Leu/Ile-tRNA-synth_edit"/>
</dbReference>
<dbReference type="NCBIfam" id="TIGR00392">
    <property type="entry name" value="ileS"/>
    <property type="match status" value="1"/>
</dbReference>
<dbReference type="PANTHER" id="PTHR42780:SF1">
    <property type="entry name" value="ISOLEUCINE--TRNA LIGASE, CYTOPLASMIC"/>
    <property type="match status" value="1"/>
</dbReference>
<dbReference type="PANTHER" id="PTHR42780">
    <property type="entry name" value="SOLEUCYL-TRNA SYNTHETASE"/>
    <property type="match status" value="1"/>
</dbReference>
<dbReference type="Pfam" id="PF08264">
    <property type="entry name" value="Anticodon_1"/>
    <property type="match status" value="1"/>
</dbReference>
<dbReference type="Pfam" id="PF19302">
    <property type="entry name" value="DUF5915"/>
    <property type="match status" value="1"/>
</dbReference>
<dbReference type="Pfam" id="PF00133">
    <property type="entry name" value="tRNA-synt_1"/>
    <property type="match status" value="1"/>
</dbReference>
<dbReference type="PRINTS" id="PR00984">
    <property type="entry name" value="TRNASYNTHILE"/>
</dbReference>
<dbReference type="SUPFAM" id="SSF47323">
    <property type="entry name" value="Anticodon-binding domain of a subclass of class I aminoacyl-tRNA synthetases"/>
    <property type="match status" value="2"/>
</dbReference>
<dbReference type="SUPFAM" id="SSF52374">
    <property type="entry name" value="Nucleotidylyl transferase"/>
    <property type="match status" value="1"/>
</dbReference>
<dbReference type="SUPFAM" id="SSF50677">
    <property type="entry name" value="ValRS/IleRS/LeuRS editing domain"/>
    <property type="match status" value="1"/>
</dbReference>
<dbReference type="PROSITE" id="PS00178">
    <property type="entry name" value="AA_TRNA_LIGASE_I"/>
    <property type="match status" value="1"/>
</dbReference>
<accession>O84022</accession>
<feature type="chain" id="PRO_0000098529" description="Isoleucine--tRNA ligase">
    <location>
        <begin position="1"/>
        <end position="1036"/>
    </location>
</feature>
<feature type="short sequence motif" description="'HIGH' region">
    <location>
        <begin position="46"/>
        <end position="56"/>
    </location>
</feature>
<feature type="short sequence motif" description="'KMSKS' region">
    <location>
        <begin position="589"/>
        <end position="593"/>
    </location>
</feature>
<feature type="binding site" evidence="1">
    <location>
        <position position="592"/>
    </location>
    <ligand>
        <name>ATP</name>
        <dbReference type="ChEBI" id="CHEBI:30616"/>
    </ligand>
</feature>